<organism>
    <name type="scientific">Homo sapiens</name>
    <name type="common">Human</name>
    <dbReference type="NCBI Taxonomy" id="9606"/>
    <lineage>
        <taxon>Eukaryota</taxon>
        <taxon>Metazoa</taxon>
        <taxon>Chordata</taxon>
        <taxon>Craniata</taxon>
        <taxon>Vertebrata</taxon>
        <taxon>Euteleostomi</taxon>
        <taxon>Mammalia</taxon>
        <taxon>Eutheria</taxon>
        <taxon>Euarchontoglires</taxon>
        <taxon>Primates</taxon>
        <taxon>Haplorrhini</taxon>
        <taxon>Catarrhini</taxon>
        <taxon>Hominidae</taxon>
        <taxon>Homo</taxon>
    </lineage>
</organism>
<feature type="initiator methionine" description="Removed" evidence="11">
    <location>
        <position position="1"/>
    </location>
</feature>
<feature type="chain" id="PRO_0000274218" description="Transforming growth factor beta regulator 1">
    <location>
        <begin position="2"/>
        <end position="411"/>
    </location>
</feature>
<feature type="domain" description="FYR N-terminal" evidence="1">
    <location>
        <begin position="182"/>
        <end position="241"/>
    </location>
</feature>
<feature type="domain" description="FYR C-terminal" evidence="2">
    <location>
        <begin position="242"/>
        <end position="321"/>
    </location>
</feature>
<feature type="region of interest" description="Disordered" evidence="3">
    <location>
        <begin position="1"/>
        <end position="29"/>
    </location>
</feature>
<feature type="region of interest" description="Disordered" evidence="3">
    <location>
        <begin position="119"/>
        <end position="146"/>
    </location>
</feature>
<feature type="modified residue" description="N-acetylserine" evidence="11">
    <location>
        <position position="2"/>
    </location>
</feature>
<feature type="modified residue" description="Phosphoserine" evidence="11 12">
    <location>
        <position position="10"/>
    </location>
</feature>
<feature type="splice variant" id="VSP_022644" description="In isoform 3." evidence="7">
    <location>
        <begin position="1"/>
        <end position="224"/>
    </location>
</feature>
<feature type="splice variant" id="VSP_022645" description="In isoform 2." evidence="6 8 9">
    <original>MSLLDGLASSPRAPLQSSKARMKKLPKKSQNEKYRLKYLRLRKAAKATVFENAAICDEIARLEEKFLKAKEERRYLLKKLLQLQALTEGEVQAAAPSHSSSLPLTYGVASSVGTIQGAGPISGPSTGAEEPFGKKTKKEKKEKGKENNKLEVLKKTCKKKKMAGGARKLVQPIALDPSGRPVFPIGLGGLTVYSLGE</original>
    <variation>MVWPALWELYRELGLFQGPALGLRNHLGRKLRRRKKKKAKRTTNWK</variation>
    <location>
        <begin position="1"/>
        <end position="197"/>
    </location>
</feature>
<feature type="sequence conflict" description="In Ref. 4; BAD96656." evidence="10" ref="4">
    <original>P</original>
    <variation>S</variation>
    <location>
        <position position="406"/>
    </location>
</feature>
<feature type="strand" evidence="13">
    <location>
        <begin position="185"/>
        <end position="187"/>
    </location>
</feature>
<feature type="strand" evidence="13">
    <location>
        <begin position="190"/>
        <end position="197"/>
    </location>
</feature>
<feature type="helix" evidence="13">
    <location>
        <begin position="203"/>
        <end position="205"/>
    </location>
</feature>
<feature type="strand" evidence="13">
    <location>
        <begin position="214"/>
        <end position="223"/>
    </location>
</feature>
<feature type="strand" evidence="13">
    <location>
        <begin position="230"/>
        <end position="240"/>
    </location>
</feature>
<feature type="strand" evidence="13">
    <location>
        <begin position="242"/>
        <end position="251"/>
    </location>
</feature>
<feature type="helix" evidence="13">
    <location>
        <begin position="255"/>
        <end position="257"/>
    </location>
</feature>
<feature type="strand" evidence="13">
    <location>
        <begin position="259"/>
        <end position="263"/>
    </location>
</feature>
<feature type="helix" evidence="13">
    <location>
        <begin position="264"/>
        <end position="279"/>
    </location>
</feature>
<feature type="helix" evidence="13">
    <location>
        <begin position="290"/>
        <end position="294"/>
    </location>
</feature>
<feature type="helix" evidence="13">
    <location>
        <begin position="299"/>
        <end position="305"/>
    </location>
</feature>
<feature type="helix" evidence="13">
    <location>
        <begin position="311"/>
        <end position="313"/>
    </location>
</feature>
<evidence type="ECO:0000255" key="1">
    <source>
        <dbReference type="PROSITE-ProRule" id="PRU00875"/>
    </source>
</evidence>
<evidence type="ECO:0000255" key="2">
    <source>
        <dbReference type="PROSITE-ProRule" id="PRU00876"/>
    </source>
</evidence>
<evidence type="ECO:0000256" key="3">
    <source>
        <dbReference type="SAM" id="MobiDB-lite"/>
    </source>
</evidence>
<evidence type="ECO:0000269" key="4">
    <source>
    </source>
</evidence>
<evidence type="ECO:0000269" key="5">
    <source>
    </source>
</evidence>
<evidence type="ECO:0000303" key="6">
    <source>
    </source>
</evidence>
<evidence type="ECO:0000303" key="7">
    <source>
    </source>
</evidence>
<evidence type="ECO:0000303" key="8">
    <source ref="3"/>
</evidence>
<evidence type="ECO:0000303" key="9">
    <source ref="4"/>
</evidence>
<evidence type="ECO:0000305" key="10"/>
<evidence type="ECO:0007744" key="11">
    <source>
    </source>
</evidence>
<evidence type="ECO:0007744" key="12">
    <source>
    </source>
</evidence>
<evidence type="ECO:0007829" key="13">
    <source>
        <dbReference type="PDB" id="2WZO"/>
    </source>
</evidence>
<gene>
    <name type="primary">TBRG1</name>
    <name type="synonym">NIAM</name>
</gene>
<proteinExistence type="evidence at protein level"/>
<dbReference type="EMBL" id="DQ144542">
    <property type="protein sequence ID" value="AAZ76016.1"/>
    <property type="molecule type" value="mRNA"/>
</dbReference>
<dbReference type="EMBL" id="AK027527">
    <property type="protein sequence ID" value="BAB55177.1"/>
    <property type="molecule type" value="mRNA"/>
</dbReference>
<dbReference type="EMBL" id="AK074140">
    <property type="protein sequence ID" value="BAB84966.1"/>
    <property type="status" value="ALT_FRAME"/>
    <property type="molecule type" value="mRNA"/>
</dbReference>
<dbReference type="EMBL" id="AY696294">
    <property type="protein sequence ID" value="AAU10523.1"/>
    <property type="molecule type" value="mRNA"/>
</dbReference>
<dbReference type="EMBL" id="AK222936">
    <property type="protein sequence ID" value="BAD96656.1"/>
    <property type="molecule type" value="mRNA"/>
</dbReference>
<dbReference type="EMBL" id="BC109269">
    <property type="protein sequence ID" value="AAI09270.1"/>
    <property type="molecule type" value="mRNA"/>
</dbReference>
<dbReference type="EMBL" id="AL713631">
    <property type="protein sequence ID" value="CAD28450.1"/>
    <property type="molecule type" value="mRNA"/>
</dbReference>
<dbReference type="EMBL" id="AL831881">
    <property type="protein sequence ID" value="CAH10595.1"/>
    <property type="molecule type" value="mRNA"/>
</dbReference>
<dbReference type="CCDS" id="CCDS8448.2">
    <molecule id="Q3YBR2-1"/>
</dbReference>
<dbReference type="RefSeq" id="NP_116200.2">
    <molecule id="Q3YBR2-1"/>
    <property type="nucleotide sequence ID" value="NM_032811.3"/>
</dbReference>
<dbReference type="RefSeq" id="XP_016873931.1">
    <molecule id="Q3YBR2-2"/>
    <property type="nucleotide sequence ID" value="XM_017018442.3"/>
</dbReference>
<dbReference type="RefSeq" id="XP_047283703.1">
    <molecule id="Q3YBR2-2"/>
    <property type="nucleotide sequence ID" value="XM_047427747.1"/>
</dbReference>
<dbReference type="RefSeq" id="XP_054226220.1">
    <molecule id="Q3YBR2-2"/>
    <property type="nucleotide sequence ID" value="XM_054370245.1"/>
</dbReference>
<dbReference type="RefSeq" id="XP_054226221.1">
    <molecule id="Q3YBR2-2"/>
    <property type="nucleotide sequence ID" value="XM_054370246.1"/>
</dbReference>
<dbReference type="PDB" id="2WZO">
    <property type="method" value="X-ray"/>
    <property type="resolution" value="1.60 A"/>
    <property type="chains" value="A=179-324"/>
</dbReference>
<dbReference type="PDBsum" id="2WZO"/>
<dbReference type="SMR" id="Q3YBR2"/>
<dbReference type="BioGRID" id="124337">
    <property type="interactions" value="25"/>
</dbReference>
<dbReference type="FunCoup" id="Q3YBR2">
    <property type="interactions" value="3219"/>
</dbReference>
<dbReference type="IntAct" id="Q3YBR2">
    <property type="interactions" value="25"/>
</dbReference>
<dbReference type="STRING" id="9606.ENSP00000409016"/>
<dbReference type="GlyGen" id="Q3YBR2">
    <property type="glycosylation" value="3 sites, 1 O-linked glycan (3 sites)"/>
</dbReference>
<dbReference type="iPTMnet" id="Q3YBR2"/>
<dbReference type="PhosphoSitePlus" id="Q3YBR2"/>
<dbReference type="BioMuta" id="TBRG1"/>
<dbReference type="DMDM" id="121943045"/>
<dbReference type="jPOST" id="Q3YBR2"/>
<dbReference type="MassIVE" id="Q3YBR2"/>
<dbReference type="PaxDb" id="9606-ENSP00000409016"/>
<dbReference type="PeptideAtlas" id="Q3YBR2"/>
<dbReference type="ProteomicsDB" id="61892">
    <molecule id="Q3YBR2-1"/>
</dbReference>
<dbReference type="ProteomicsDB" id="61893">
    <molecule id="Q3YBR2-2"/>
</dbReference>
<dbReference type="ProteomicsDB" id="61894">
    <molecule id="Q3YBR2-3"/>
</dbReference>
<dbReference type="Antibodypedia" id="45986">
    <property type="antibodies" value="139 antibodies from 24 providers"/>
</dbReference>
<dbReference type="DNASU" id="84897"/>
<dbReference type="Ensembl" id="ENST00000441174.8">
    <molecule id="Q3YBR2-1"/>
    <property type="protein sequence ID" value="ENSP00000409016.3"/>
    <property type="gene ID" value="ENSG00000154144.13"/>
</dbReference>
<dbReference type="GeneID" id="84897"/>
<dbReference type="KEGG" id="hsa:84897"/>
<dbReference type="MANE-Select" id="ENST00000441174.8">
    <property type="protein sequence ID" value="ENSP00000409016.3"/>
    <property type="RefSeq nucleotide sequence ID" value="NM_032811.3"/>
    <property type="RefSeq protein sequence ID" value="NP_116200.2"/>
</dbReference>
<dbReference type="UCSC" id="uc001qak.5">
    <molecule id="Q3YBR2-1"/>
    <property type="organism name" value="human"/>
</dbReference>
<dbReference type="AGR" id="HGNC:29551"/>
<dbReference type="CTD" id="84897"/>
<dbReference type="DisGeNET" id="84897"/>
<dbReference type="GeneCards" id="TBRG1"/>
<dbReference type="HGNC" id="HGNC:29551">
    <property type="gene designation" value="TBRG1"/>
</dbReference>
<dbReference type="HPA" id="ENSG00000154144">
    <property type="expression patterns" value="Low tissue specificity"/>
</dbReference>
<dbReference type="MIM" id="610614">
    <property type="type" value="gene"/>
</dbReference>
<dbReference type="neXtProt" id="NX_Q3YBR2"/>
<dbReference type="OpenTargets" id="ENSG00000154144"/>
<dbReference type="PharmGKB" id="PA134926528"/>
<dbReference type="VEuPathDB" id="HostDB:ENSG00000154144"/>
<dbReference type="eggNOG" id="KOG4443">
    <property type="taxonomic scope" value="Eukaryota"/>
</dbReference>
<dbReference type="GeneTree" id="ENSGT00390000013374"/>
<dbReference type="HOGENOM" id="CLU_037126_0_0_1"/>
<dbReference type="InParanoid" id="Q3YBR2"/>
<dbReference type="OMA" id="YYNDYHK"/>
<dbReference type="OrthoDB" id="285793at2759"/>
<dbReference type="PAN-GO" id="Q3YBR2">
    <property type="GO annotations" value="2 GO annotations based on evolutionary models"/>
</dbReference>
<dbReference type="PhylomeDB" id="Q3YBR2"/>
<dbReference type="TreeFam" id="TF324736"/>
<dbReference type="PathwayCommons" id="Q3YBR2"/>
<dbReference type="SignaLink" id="Q3YBR2"/>
<dbReference type="BioGRID-ORCS" id="84897">
    <property type="hits" value="12 hits in 1160 CRISPR screens"/>
</dbReference>
<dbReference type="CD-CODE" id="DEE660B4">
    <property type="entry name" value="Stress granule"/>
</dbReference>
<dbReference type="ChiTaRS" id="TBRG1">
    <property type="organism name" value="human"/>
</dbReference>
<dbReference type="EvolutionaryTrace" id="Q3YBR2"/>
<dbReference type="GeneWiki" id="TBRG1"/>
<dbReference type="GenomeRNAi" id="84897"/>
<dbReference type="Pharos" id="Q3YBR2">
    <property type="development level" value="Tbio"/>
</dbReference>
<dbReference type="PRO" id="PR:Q3YBR2"/>
<dbReference type="Proteomes" id="UP000005640">
    <property type="component" value="Chromosome 11"/>
</dbReference>
<dbReference type="RNAct" id="Q3YBR2">
    <property type="molecule type" value="protein"/>
</dbReference>
<dbReference type="Bgee" id="ENSG00000154144">
    <property type="expression patterns" value="Expressed in granulocyte and 180 other cell types or tissues"/>
</dbReference>
<dbReference type="ExpressionAtlas" id="Q3YBR2">
    <property type="expression patterns" value="baseline and differential"/>
</dbReference>
<dbReference type="GO" id="GO:0005654">
    <property type="term" value="C:nucleoplasm"/>
    <property type="evidence" value="ECO:0000314"/>
    <property type="project" value="HPA"/>
</dbReference>
<dbReference type="GO" id="GO:0005634">
    <property type="term" value="C:nucleus"/>
    <property type="evidence" value="ECO:0000314"/>
    <property type="project" value="HGNC-UCL"/>
</dbReference>
<dbReference type="GO" id="GO:0006260">
    <property type="term" value="P:DNA replication"/>
    <property type="evidence" value="ECO:0000315"/>
    <property type="project" value="HGNC-UCL"/>
</dbReference>
<dbReference type="GO" id="GO:0008285">
    <property type="term" value="P:negative regulation of cell population proliferation"/>
    <property type="evidence" value="ECO:0000315"/>
    <property type="project" value="HGNC-UCL"/>
</dbReference>
<dbReference type="GO" id="GO:1990173">
    <property type="term" value="P:protein localization to nucleoplasm"/>
    <property type="evidence" value="ECO:0000314"/>
    <property type="project" value="HGNC-UCL"/>
</dbReference>
<dbReference type="GO" id="GO:0050821">
    <property type="term" value="P:protein stabilization"/>
    <property type="evidence" value="ECO:0000315"/>
    <property type="project" value="HGNC-UCL"/>
</dbReference>
<dbReference type="GO" id="GO:0051726">
    <property type="term" value="P:regulation of cell cycle"/>
    <property type="evidence" value="ECO:0000315"/>
    <property type="project" value="HGNC-UCL"/>
</dbReference>
<dbReference type="FunFam" id="3.30.160.360:FF:000007">
    <property type="entry name" value="Transforming growth factor beta regulator 1"/>
    <property type="match status" value="1"/>
</dbReference>
<dbReference type="Gene3D" id="3.30.160.360">
    <property type="match status" value="1"/>
</dbReference>
<dbReference type="InterPro" id="IPR003889">
    <property type="entry name" value="FYrich_C"/>
</dbReference>
<dbReference type="InterPro" id="IPR003888">
    <property type="entry name" value="FYrich_N"/>
</dbReference>
<dbReference type="InterPro" id="IPR040092">
    <property type="entry name" value="TBRG1"/>
</dbReference>
<dbReference type="PANTHER" id="PTHR22715">
    <property type="entry name" value="TRANSFORMING GROWTH FACTOR BETA REGULATED GENE 1"/>
    <property type="match status" value="1"/>
</dbReference>
<dbReference type="PANTHER" id="PTHR22715:SF0">
    <property type="entry name" value="TRANSFORMING GROWTH FACTOR BETA REGULATOR 1"/>
    <property type="match status" value="1"/>
</dbReference>
<dbReference type="Pfam" id="PF05965">
    <property type="entry name" value="FYRC"/>
    <property type="match status" value="1"/>
</dbReference>
<dbReference type="Pfam" id="PF05964">
    <property type="entry name" value="FYRN"/>
    <property type="match status" value="1"/>
</dbReference>
<dbReference type="SMART" id="SM00542">
    <property type="entry name" value="FYRC"/>
    <property type="match status" value="1"/>
</dbReference>
<dbReference type="SMART" id="SM00541">
    <property type="entry name" value="FYRN"/>
    <property type="match status" value="1"/>
</dbReference>
<dbReference type="PROSITE" id="PS51543">
    <property type="entry name" value="FYRC"/>
    <property type="match status" value="1"/>
</dbReference>
<dbReference type="PROSITE" id="PS51542">
    <property type="entry name" value="FYRN"/>
    <property type="match status" value="1"/>
</dbReference>
<accession>Q3YBR2</accession>
<accession>Q53GJ5</accession>
<accession>Q66ZJ6</accession>
<accession>Q69YS7</accession>
<accession>Q8TCS4</accession>
<accession>Q8TEI4</accession>
<accession>Q96SV0</accession>
<name>TBRG1_HUMAN</name>
<reference key="1">
    <citation type="journal article" date="2007" name="J. Biol. Chem.">
        <title>A novel nuclear interactor of ARF and MDM2 (NIAM) that maintains chromosomal stability.</title>
        <authorList>
            <person name="Tompkins V.S."/>
            <person name="Hagen J."/>
            <person name="Frazier A.A."/>
            <person name="Lushnikova T."/>
            <person name="Fitzgerald M.P."/>
            <person name="di Tommaso A.D."/>
            <person name="Ladeveze V."/>
            <person name="Domann F.E."/>
            <person name="Eischen C.M."/>
            <person name="Quelle D.E."/>
        </authorList>
    </citation>
    <scope>NUCLEOTIDE SEQUENCE [MRNA] (ISOFORM 1)</scope>
    <scope>FUNCTION</scope>
    <scope>SUBCELLULAR LOCATION</scope>
    <scope>TISSUE SPECIFICITY</scope>
    <scope>INTERACTION WITH CDKN2A AND MDM2</scope>
    <scope>UBIQUITINATION</scope>
    <source>
        <tissue>Pancreas</tissue>
    </source>
</reference>
<reference key="2">
    <citation type="journal article" date="2004" name="Nat. Genet.">
        <title>Complete sequencing and characterization of 21,243 full-length human cDNAs.</title>
        <authorList>
            <person name="Ota T."/>
            <person name="Suzuki Y."/>
            <person name="Nishikawa T."/>
            <person name="Otsuki T."/>
            <person name="Sugiyama T."/>
            <person name="Irie R."/>
            <person name="Wakamatsu A."/>
            <person name="Hayashi K."/>
            <person name="Sato H."/>
            <person name="Nagai K."/>
            <person name="Kimura K."/>
            <person name="Makita H."/>
            <person name="Sekine M."/>
            <person name="Obayashi M."/>
            <person name="Nishi T."/>
            <person name="Shibahara T."/>
            <person name="Tanaka T."/>
            <person name="Ishii S."/>
            <person name="Yamamoto J."/>
            <person name="Saito K."/>
            <person name="Kawai Y."/>
            <person name="Isono Y."/>
            <person name="Nakamura Y."/>
            <person name="Nagahari K."/>
            <person name="Murakami K."/>
            <person name="Yasuda T."/>
            <person name="Iwayanagi T."/>
            <person name="Wagatsuma M."/>
            <person name="Shiratori A."/>
            <person name="Sudo H."/>
            <person name="Hosoiri T."/>
            <person name="Kaku Y."/>
            <person name="Kodaira H."/>
            <person name="Kondo H."/>
            <person name="Sugawara M."/>
            <person name="Takahashi M."/>
            <person name="Kanda K."/>
            <person name="Yokoi T."/>
            <person name="Furuya T."/>
            <person name="Kikkawa E."/>
            <person name="Omura Y."/>
            <person name="Abe K."/>
            <person name="Kamihara K."/>
            <person name="Katsuta N."/>
            <person name="Sato K."/>
            <person name="Tanikawa M."/>
            <person name="Yamazaki M."/>
            <person name="Ninomiya K."/>
            <person name="Ishibashi T."/>
            <person name="Yamashita H."/>
            <person name="Murakawa K."/>
            <person name="Fujimori K."/>
            <person name="Tanai H."/>
            <person name="Kimata M."/>
            <person name="Watanabe M."/>
            <person name="Hiraoka S."/>
            <person name="Chiba Y."/>
            <person name="Ishida S."/>
            <person name="Ono Y."/>
            <person name="Takiguchi S."/>
            <person name="Watanabe S."/>
            <person name="Yosida M."/>
            <person name="Hotuta T."/>
            <person name="Kusano J."/>
            <person name="Kanehori K."/>
            <person name="Takahashi-Fujii A."/>
            <person name="Hara H."/>
            <person name="Tanase T.-O."/>
            <person name="Nomura Y."/>
            <person name="Togiya S."/>
            <person name="Komai F."/>
            <person name="Hara R."/>
            <person name="Takeuchi K."/>
            <person name="Arita M."/>
            <person name="Imose N."/>
            <person name="Musashino K."/>
            <person name="Yuuki H."/>
            <person name="Oshima A."/>
            <person name="Sasaki N."/>
            <person name="Aotsuka S."/>
            <person name="Yoshikawa Y."/>
            <person name="Matsunawa H."/>
            <person name="Ichihara T."/>
            <person name="Shiohata N."/>
            <person name="Sano S."/>
            <person name="Moriya S."/>
            <person name="Momiyama H."/>
            <person name="Satoh N."/>
            <person name="Takami S."/>
            <person name="Terashima Y."/>
            <person name="Suzuki O."/>
            <person name="Nakagawa S."/>
            <person name="Senoh A."/>
            <person name="Mizoguchi H."/>
            <person name="Goto Y."/>
            <person name="Shimizu F."/>
            <person name="Wakebe H."/>
            <person name="Hishigaki H."/>
            <person name="Watanabe T."/>
            <person name="Sugiyama A."/>
            <person name="Takemoto M."/>
            <person name="Kawakami B."/>
            <person name="Yamazaki M."/>
            <person name="Watanabe K."/>
            <person name="Kumagai A."/>
            <person name="Itakura S."/>
            <person name="Fukuzumi Y."/>
            <person name="Fujimori Y."/>
            <person name="Komiyama M."/>
            <person name="Tashiro H."/>
            <person name="Tanigami A."/>
            <person name="Fujiwara T."/>
            <person name="Ono T."/>
            <person name="Yamada K."/>
            <person name="Fujii Y."/>
            <person name="Ozaki K."/>
            <person name="Hirao M."/>
            <person name="Ohmori Y."/>
            <person name="Kawabata A."/>
            <person name="Hikiji T."/>
            <person name="Kobatake N."/>
            <person name="Inagaki H."/>
            <person name="Ikema Y."/>
            <person name="Okamoto S."/>
            <person name="Okitani R."/>
            <person name="Kawakami T."/>
            <person name="Noguchi S."/>
            <person name="Itoh T."/>
            <person name="Shigeta K."/>
            <person name="Senba T."/>
            <person name="Matsumura K."/>
            <person name="Nakajima Y."/>
            <person name="Mizuno T."/>
            <person name="Morinaga M."/>
            <person name="Sasaki M."/>
            <person name="Togashi T."/>
            <person name="Oyama M."/>
            <person name="Hata H."/>
            <person name="Watanabe M."/>
            <person name="Komatsu T."/>
            <person name="Mizushima-Sugano J."/>
            <person name="Satoh T."/>
            <person name="Shirai Y."/>
            <person name="Takahashi Y."/>
            <person name="Nakagawa K."/>
            <person name="Okumura K."/>
            <person name="Nagase T."/>
            <person name="Nomura N."/>
            <person name="Kikuchi H."/>
            <person name="Masuho Y."/>
            <person name="Yamashita R."/>
            <person name="Nakai K."/>
            <person name="Yada T."/>
            <person name="Nakamura Y."/>
            <person name="Ohara O."/>
            <person name="Isogai T."/>
            <person name="Sugano S."/>
        </authorList>
    </citation>
    <scope>NUCLEOTIDE SEQUENCE [LARGE SCALE MRNA] (ISOFORM 2)</scope>
    <source>
        <tissue>Spleen</tissue>
    </source>
</reference>
<reference key="3">
    <citation type="submission" date="2004-07" db="EMBL/GenBank/DDBJ databases">
        <authorList>
            <person name="Zhou G."/>
            <person name="Li M."/>
            <person name="Li H."/>
            <person name="Shen C."/>
            <person name="Zhong G."/>
            <person name="Lin L."/>
            <person name="Yang S."/>
        </authorList>
    </citation>
    <scope>NUCLEOTIDE SEQUENCE [LARGE SCALE MRNA] (ISOFORM 2)</scope>
</reference>
<reference key="4">
    <citation type="submission" date="2005-04" db="EMBL/GenBank/DDBJ databases">
        <authorList>
            <person name="Suzuki Y."/>
            <person name="Sugano S."/>
            <person name="Totoki Y."/>
            <person name="Toyoda A."/>
            <person name="Takeda T."/>
            <person name="Sakaki Y."/>
            <person name="Tanaka A."/>
            <person name="Yokoyama S."/>
        </authorList>
    </citation>
    <scope>NUCLEOTIDE SEQUENCE [LARGE SCALE MRNA] (ISOFORM 2)</scope>
    <source>
        <tissue>Kidney</tissue>
    </source>
</reference>
<reference key="5">
    <citation type="journal article" date="2004" name="Genome Res.">
        <title>The status, quality, and expansion of the NIH full-length cDNA project: the Mammalian Gene Collection (MGC).</title>
        <authorList>
            <consortium name="The MGC Project Team"/>
        </authorList>
    </citation>
    <scope>NUCLEOTIDE SEQUENCE [LARGE SCALE MRNA] (ISOFORM 3)</scope>
</reference>
<reference key="6">
    <citation type="journal article" date="2007" name="BMC Genomics">
        <title>The full-ORF clone resource of the German cDNA consortium.</title>
        <authorList>
            <person name="Bechtel S."/>
            <person name="Rosenfelder H."/>
            <person name="Duda A."/>
            <person name="Schmidt C.P."/>
            <person name="Ernst U."/>
            <person name="Wellenreuther R."/>
            <person name="Mehrle A."/>
            <person name="Schuster C."/>
            <person name="Bahr A."/>
            <person name="Bloecker H."/>
            <person name="Heubner D."/>
            <person name="Hoerlein A."/>
            <person name="Michel G."/>
            <person name="Wedler H."/>
            <person name="Koehrer K."/>
            <person name="Ottenwaelder B."/>
            <person name="Poustka A."/>
            <person name="Wiemann S."/>
            <person name="Schupp I."/>
        </authorList>
    </citation>
    <scope>NUCLEOTIDE SEQUENCE [LARGE SCALE MRNA] OF 220-411</scope>
    <source>
        <tissue>Amygdala</tissue>
        <tissue>Brain</tissue>
    </source>
</reference>
<reference key="7">
    <citation type="journal article" date="2006" name="Cell Cycle">
        <title>Identification of novel ARF binding proteins by two-hybrid screening.</title>
        <authorList>
            <person name="Tompkins V."/>
            <person name="Hagen J."/>
            <person name="Zediak V.P."/>
            <person name="Quelle D.E."/>
        </authorList>
    </citation>
    <scope>INTERACTION WITH CDKN2A</scope>
</reference>
<reference key="8">
    <citation type="journal article" date="2010" name="Sci. Signal.">
        <title>Quantitative phosphoproteomics reveals widespread full phosphorylation site occupancy during mitosis.</title>
        <authorList>
            <person name="Olsen J.V."/>
            <person name="Vermeulen M."/>
            <person name="Santamaria A."/>
            <person name="Kumar C."/>
            <person name="Miller M.L."/>
            <person name="Jensen L.J."/>
            <person name="Gnad F."/>
            <person name="Cox J."/>
            <person name="Jensen T.S."/>
            <person name="Nigg E.A."/>
            <person name="Brunak S."/>
            <person name="Mann M."/>
        </authorList>
    </citation>
    <scope>ACETYLATION [LARGE SCALE ANALYSIS] AT SER-2</scope>
    <scope>PHOSPHORYLATION [LARGE SCALE ANALYSIS] AT SER-10</scope>
    <scope>CLEAVAGE OF INITIATOR METHIONINE [LARGE SCALE ANALYSIS]</scope>
    <scope>IDENTIFICATION BY MASS SPECTROMETRY [LARGE SCALE ANALYSIS]</scope>
    <source>
        <tissue>Cervix carcinoma</tissue>
    </source>
</reference>
<reference key="9">
    <citation type="journal article" date="2013" name="J. Proteome Res.">
        <title>Toward a comprehensive characterization of a human cancer cell phosphoproteome.</title>
        <authorList>
            <person name="Zhou H."/>
            <person name="Di Palma S."/>
            <person name="Preisinger C."/>
            <person name="Peng M."/>
            <person name="Polat A.N."/>
            <person name="Heck A.J."/>
            <person name="Mohammed S."/>
        </authorList>
    </citation>
    <scope>PHOSPHORYLATION [LARGE SCALE ANALYSIS] AT SER-10</scope>
    <scope>IDENTIFICATION BY MASS SPECTROMETRY [LARGE SCALE ANALYSIS]</scope>
    <source>
        <tissue>Cervix carcinoma</tissue>
        <tissue>Erythroleukemia</tissue>
    </source>
</reference>
<reference key="10">
    <citation type="journal article" date="2010" name="Protein Sci.">
        <title>The structure of the FYR domain of transforming growth factor beta regulator 1.</title>
        <authorList>
            <person name="Garcia-Alai M.M."/>
            <person name="Allen M.D."/>
            <person name="Joerger A.C."/>
            <person name="Bycroft M."/>
        </authorList>
    </citation>
    <scope>X-RAY CRYSTALLOGRAPHY (1.6 ANGSTROMS) OF 179-324</scope>
</reference>
<comment type="function">
    <text evidence="5">Acts as a growth inhibitor. Can activate p53/TP53, causes G1 arrest and collaborates with CDKN2A to restrict proliferation, but does not require either protein to inhibit DNA synthesis. Redistributes CDKN2A into the nucleoplasm. Involved in maintaining chromosomal stability.</text>
</comment>
<comment type="subunit">
    <text evidence="4 5">Interacts with CDKN2A and MDM2.</text>
</comment>
<comment type="interaction">
    <interactant intactId="EBI-2800552">
        <id>Q3YBR2</id>
    </interactant>
    <interactant intactId="EBI-395638">
        <id>O14645</id>
        <label>DNALI1</label>
    </interactant>
    <organismsDiffer>false</organismsDiffer>
    <experiments>3</experiments>
</comment>
<comment type="interaction">
    <interactant intactId="EBI-2800552">
        <id>Q3YBR2</id>
    </interactant>
    <interactant intactId="EBI-948266">
        <id>O14901</id>
        <label>KLF11</label>
    </interactant>
    <organismsDiffer>false</organismsDiffer>
    <experiments>3</experiments>
</comment>
<comment type="interaction">
    <interactant intactId="EBI-2800552">
        <id>Q3YBR2</id>
    </interactant>
    <interactant intactId="EBI-50433196">
        <id>A0A6Q8PF08</id>
        <label>PMP22</label>
    </interactant>
    <organismsDiffer>false</organismsDiffer>
    <experiments>3</experiments>
</comment>
<comment type="interaction">
    <interactant intactId="EBI-2800552">
        <id>Q3YBR2</id>
    </interactant>
    <interactant intactId="EBI-8463848">
        <id>Q8NB12</id>
        <label>SMYD1</label>
    </interactant>
    <organismsDiffer>false</organismsDiffer>
    <experiments>3</experiments>
</comment>
<comment type="interaction">
    <interactant intactId="EBI-2800552">
        <id>Q3YBR2</id>
    </interactant>
    <interactant intactId="EBI-746595">
        <id>Q96E35</id>
        <label>ZMYND19</label>
    </interactant>
    <organismsDiffer>false</organismsDiffer>
    <experiments>4</experiments>
</comment>
<comment type="subcellular location">
    <subcellularLocation>
        <location evidence="5">Nucleus</location>
    </subcellularLocation>
</comment>
<comment type="alternative products">
    <event type="alternative splicing"/>
    <isoform>
        <id>Q3YBR2-1</id>
        <name>1</name>
        <sequence type="displayed"/>
    </isoform>
    <isoform>
        <id>Q3YBR2-2</id>
        <name>2</name>
        <sequence type="described" ref="VSP_022645"/>
    </isoform>
    <isoform>
        <id>Q3YBR2-3</id>
        <name>3</name>
        <sequence type="described" ref="VSP_022644"/>
    </isoform>
</comment>
<comment type="tissue specificity">
    <text evidence="5">Widely expressed at low levels in most tissues, with highest levels in pancreas, lung and liver. Expression is decreased in primary tumors including lung, liver, breast, pancreas and kidney carcinomas, chronic lymphocytic leukemia and diffuse large B-cell lymphoma.</text>
</comment>
<comment type="PTM">
    <text evidence="5">Ubiquitinated; mediated by MDM2 and leading to its subsequent proteasomal degradation.</text>
</comment>
<comment type="similarity">
    <text evidence="10">Belongs to the TBRG1 family.</text>
</comment>
<comment type="sequence caution" evidence="10">
    <conflict type="frameshift">
        <sequence resource="EMBL-CDS" id="BAB84966"/>
    </conflict>
</comment>
<sequence length="411" mass="44946">MSLLDGLASSPRAPLQSSKARMKKLPKKSQNEKYRLKYLRLRKAAKATVFENAAICDEIARLEEKFLKAKEERRYLLKKLLQLQALTEGEVQAAAPSHSSSLPLTYGVASSVGTIQGAGPISGPSTGAEEPFGKKTKKEKKEKGKENNKLEVLKKTCKKKKMAGGARKLVQPIALDPSGRPVFPIGLGGLTVYSLGEIITDRPGFHDESAIYPVGYCSTRIYASMKCPDQKCLYTCQIKDGGVQPQFEIVPEDDPQNAIVSSSADACHAELLRTISTTMGKLMPNLLPAGADFFGFSHPAIHNLIQSCPGARKCINYQWVKFDVCKPGDGQLPEGLPENDAAMSFEAFQRQIFDEDQNDPLLPGSLDLPELQPAAFVSSYQPMYLTHEPLVDTHLQHLKSPSQGSPIQSSD</sequence>
<protein>
    <recommendedName>
        <fullName>Transforming growth factor beta regulator 1</fullName>
    </recommendedName>
    <alternativeName>
        <fullName>Nuclear interactor of ARF and Mdm2</fullName>
    </alternativeName>
</protein>
<keyword id="KW-0002">3D-structure</keyword>
<keyword id="KW-0007">Acetylation</keyword>
<keyword id="KW-0025">Alternative splicing</keyword>
<keyword id="KW-0131">Cell cycle</keyword>
<keyword id="KW-0539">Nucleus</keyword>
<keyword id="KW-0597">Phosphoprotein</keyword>
<keyword id="KW-1267">Proteomics identification</keyword>
<keyword id="KW-1185">Reference proteome</keyword>
<keyword id="KW-0043">Tumor suppressor</keyword>
<keyword id="KW-0832">Ubl conjugation</keyword>